<accession>Q74E52</accession>
<keyword id="KW-0328">Glycosyltransferase</keyword>
<keyword id="KW-0660">Purine salvage</keyword>
<keyword id="KW-1185">Reference proteome</keyword>
<keyword id="KW-0808">Transferase</keyword>
<protein>
    <recommendedName>
        <fullName evidence="1">S-methyl-5'-thioadenosine phosphorylase</fullName>
        <ecNumber evidence="1">2.4.2.28</ecNumber>
    </recommendedName>
    <alternativeName>
        <fullName evidence="1">5'-methylthioadenosine phosphorylase</fullName>
        <shortName evidence="1">MTA phosphorylase</shortName>
        <shortName evidence="1">MTAP</shortName>
    </alternativeName>
</protein>
<proteinExistence type="inferred from homology"/>
<reference key="1">
    <citation type="journal article" date="2003" name="Science">
        <title>Genome of Geobacter sulfurreducens: metal reduction in subsurface environments.</title>
        <authorList>
            <person name="Methe B.A."/>
            <person name="Nelson K.E."/>
            <person name="Eisen J.A."/>
            <person name="Paulsen I.T."/>
            <person name="Nelson W.C."/>
            <person name="Heidelberg J.F."/>
            <person name="Wu D."/>
            <person name="Wu M."/>
            <person name="Ward N.L."/>
            <person name="Beanan M.J."/>
            <person name="Dodson R.J."/>
            <person name="Madupu R."/>
            <person name="Brinkac L.M."/>
            <person name="Daugherty S.C."/>
            <person name="DeBoy R.T."/>
            <person name="Durkin A.S."/>
            <person name="Gwinn M.L."/>
            <person name="Kolonay J.F."/>
            <person name="Sullivan S.A."/>
            <person name="Haft D.H."/>
            <person name="Selengut J."/>
            <person name="Davidsen T.M."/>
            <person name="Zafar N."/>
            <person name="White O."/>
            <person name="Tran B."/>
            <person name="Romero C."/>
            <person name="Forberger H.A."/>
            <person name="Weidman J.F."/>
            <person name="Khouri H.M."/>
            <person name="Feldblyum T.V."/>
            <person name="Utterback T.R."/>
            <person name="Van Aken S.E."/>
            <person name="Lovley D.R."/>
            <person name="Fraser C.M."/>
        </authorList>
    </citation>
    <scope>NUCLEOTIDE SEQUENCE [LARGE SCALE GENOMIC DNA]</scope>
    <source>
        <strain>ATCC 51573 / DSM 12127 / PCA</strain>
    </source>
</reference>
<organism>
    <name type="scientific">Geobacter sulfurreducens (strain ATCC 51573 / DSM 12127 / PCA)</name>
    <dbReference type="NCBI Taxonomy" id="243231"/>
    <lineage>
        <taxon>Bacteria</taxon>
        <taxon>Pseudomonadati</taxon>
        <taxon>Thermodesulfobacteriota</taxon>
        <taxon>Desulfuromonadia</taxon>
        <taxon>Geobacterales</taxon>
        <taxon>Geobacteraceae</taxon>
        <taxon>Geobacter</taxon>
    </lineage>
</organism>
<comment type="function">
    <text evidence="1">Catalyzes the reversible phosphorylation of S-methyl-5'-thioadenosine (MTA) to adenine and 5-methylthioribose-1-phosphate. Involved in the breakdown of MTA, a major by-product of polyamine biosynthesis. Responsible for the first step in the methionine salvage pathway after MTA has been generated from S-adenosylmethionine. Has broad substrate specificity with 6-aminopurine nucleosides as preferred substrates.</text>
</comment>
<comment type="catalytic activity">
    <reaction evidence="1">
        <text>S-methyl-5'-thioadenosine + phosphate = 5-(methylsulfanyl)-alpha-D-ribose 1-phosphate + adenine</text>
        <dbReference type="Rhea" id="RHEA:11852"/>
        <dbReference type="ChEBI" id="CHEBI:16708"/>
        <dbReference type="ChEBI" id="CHEBI:17509"/>
        <dbReference type="ChEBI" id="CHEBI:43474"/>
        <dbReference type="ChEBI" id="CHEBI:58533"/>
        <dbReference type="EC" id="2.4.2.28"/>
    </reaction>
</comment>
<comment type="pathway">
    <text evidence="1">Amino-acid biosynthesis; L-methionine biosynthesis via salvage pathway; S-methyl-5-thio-alpha-D-ribose 1-phosphate from S-methyl-5'-thioadenosine (phosphorylase route): step 1/1.</text>
</comment>
<comment type="subunit">
    <text evidence="1">Homohexamer. Dimer of a homotrimer.</text>
</comment>
<comment type="similarity">
    <text evidence="1">Belongs to the PNP/MTAP phosphorylase family. MTAP subfamily.</text>
</comment>
<sequence>MEQVIGVIGGSGLYEMEGLQDVRSIVVETPFGAPSDEFVTGVLDGVRMVFLPRHGRGHRLLPTEVNYRANIYGMKKLGVTRIISVSAVGSMREEIVPGHIVIPDQFIDRTNATRANTFFGNGVVAHIQFADPVCADLSADLYAAAQEAGATVHRGGTYICMEGPAFSTRAESNLYRSFGVSVIGMTNIPEAKLAREAEICYGVIALATDYDCWHESHDDVSVDAIIAIIKQNVAMAKSIIRNAVRRIDRERNCPCASALRYAIITDKAAIPAETKERLDLIIGSYV</sequence>
<feature type="chain" id="PRO_0000415092" description="S-methyl-5'-thioadenosine phosphorylase">
    <location>
        <begin position="1"/>
        <end position="286"/>
    </location>
</feature>
<feature type="binding site" evidence="1">
    <location>
        <position position="11"/>
    </location>
    <ligand>
        <name>phosphate</name>
        <dbReference type="ChEBI" id="CHEBI:43474"/>
    </ligand>
</feature>
<feature type="binding site" evidence="1">
    <location>
        <begin position="53"/>
        <end position="54"/>
    </location>
    <ligand>
        <name>phosphate</name>
        <dbReference type="ChEBI" id="CHEBI:43474"/>
    </ligand>
</feature>
<feature type="binding site" evidence="1">
    <location>
        <begin position="86"/>
        <end position="87"/>
    </location>
    <ligand>
        <name>phosphate</name>
        <dbReference type="ChEBI" id="CHEBI:43474"/>
    </ligand>
</feature>
<feature type="binding site" evidence="1">
    <location>
        <position position="185"/>
    </location>
    <ligand>
        <name>substrate</name>
    </ligand>
</feature>
<feature type="binding site" evidence="1">
    <location>
        <position position="186"/>
    </location>
    <ligand>
        <name>phosphate</name>
        <dbReference type="ChEBI" id="CHEBI:43474"/>
    </ligand>
</feature>
<feature type="binding site" evidence="1">
    <location>
        <begin position="209"/>
        <end position="211"/>
    </location>
    <ligand>
        <name>substrate</name>
    </ligand>
</feature>
<feature type="site" description="Important for substrate specificity" evidence="1">
    <location>
        <position position="167"/>
    </location>
</feature>
<feature type="site" description="Important for substrate specificity" evidence="1">
    <location>
        <position position="222"/>
    </location>
</feature>
<dbReference type="EC" id="2.4.2.28" evidence="1"/>
<dbReference type="EMBL" id="AE017180">
    <property type="protein sequence ID" value="AAR34438.1"/>
    <property type="molecule type" value="Genomic_DNA"/>
</dbReference>
<dbReference type="RefSeq" id="NP_952165.1">
    <property type="nucleotide sequence ID" value="NC_002939.5"/>
</dbReference>
<dbReference type="RefSeq" id="WP_010941773.1">
    <property type="nucleotide sequence ID" value="NC_002939.5"/>
</dbReference>
<dbReference type="SMR" id="Q74E52"/>
<dbReference type="FunCoup" id="Q74E52">
    <property type="interactions" value="503"/>
</dbReference>
<dbReference type="STRING" id="243231.GSU1112"/>
<dbReference type="EnsemblBacteria" id="AAR34438">
    <property type="protein sequence ID" value="AAR34438"/>
    <property type="gene ID" value="GSU1112"/>
</dbReference>
<dbReference type="KEGG" id="gsu:GSU1112"/>
<dbReference type="PATRIC" id="fig|243231.5.peg.1108"/>
<dbReference type="eggNOG" id="COG0005">
    <property type="taxonomic scope" value="Bacteria"/>
</dbReference>
<dbReference type="HOGENOM" id="CLU_054456_0_1_7"/>
<dbReference type="InParanoid" id="Q74E52"/>
<dbReference type="OrthoDB" id="1523230at2"/>
<dbReference type="UniPathway" id="UPA00904">
    <property type="reaction ID" value="UER00873"/>
</dbReference>
<dbReference type="Proteomes" id="UP000000577">
    <property type="component" value="Chromosome"/>
</dbReference>
<dbReference type="GO" id="GO:0005829">
    <property type="term" value="C:cytosol"/>
    <property type="evidence" value="ECO:0000318"/>
    <property type="project" value="GO_Central"/>
</dbReference>
<dbReference type="GO" id="GO:0017061">
    <property type="term" value="F:S-methyl-5-thioadenosine phosphorylase activity"/>
    <property type="evidence" value="ECO:0000318"/>
    <property type="project" value="GO_Central"/>
</dbReference>
<dbReference type="GO" id="GO:0019509">
    <property type="term" value="P:L-methionine salvage from methylthioadenosine"/>
    <property type="evidence" value="ECO:0000318"/>
    <property type="project" value="GO_Central"/>
</dbReference>
<dbReference type="GO" id="GO:0006166">
    <property type="term" value="P:purine ribonucleoside salvage"/>
    <property type="evidence" value="ECO:0007669"/>
    <property type="project" value="UniProtKB-KW"/>
</dbReference>
<dbReference type="CDD" id="cd09010">
    <property type="entry name" value="MTAP_SsMTAPII_like_MTIP"/>
    <property type="match status" value="1"/>
</dbReference>
<dbReference type="FunFam" id="3.40.50.1580:FF:000008">
    <property type="entry name" value="S-methyl-5'-thioadenosine phosphorylase"/>
    <property type="match status" value="1"/>
</dbReference>
<dbReference type="Gene3D" id="3.40.50.1580">
    <property type="entry name" value="Nucleoside phosphorylase domain"/>
    <property type="match status" value="1"/>
</dbReference>
<dbReference type="HAMAP" id="MF_01963">
    <property type="entry name" value="MTAP"/>
    <property type="match status" value="1"/>
</dbReference>
<dbReference type="InterPro" id="IPR010044">
    <property type="entry name" value="MTAP"/>
</dbReference>
<dbReference type="InterPro" id="IPR000845">
    <property type="entry name" value="Nucleoside_phosphorylase_d"/>
</dbReference>
<dbReference type="InterPro" id="IPR035994">
    <property type="entry name" value="Nucleoside_phosphorylase_sf"/>
</dbReference>
<dbReference type="NCBIfam" id="TIGR01694">
    <property type="entry name" value="MTAP"/>
    <property type="match status" value="1"/>
</dbReference>
<dbReference type="PANTHER" id="PTHR42679">
    <property type="entry name" value="S-METHYL-5'-THIOADENOSINE PHOSPHORYLASE"/>
    <property type="match status" value="1"/>
</dbReference>
<dbReference type="PANTHER" id="PTHR42679:SF2">
    <property type="entry name" value="S-METHYL-5'-THIOADENOSINE PHOSPHORYLASE"/>
    <property type="match status" value="1"/>
</dbReference>
<dbReference type="Pfam" id="PF01048">
    <property type="entry name" value="PNP_UDP_1"/>
    <property type="match status" value="1"/>
</dbReference>
<dbReference type="SUPFAM" id="SSF53167">
    <property type="entry name" value="Purine and uridine phosphorylases"/>
    <property type="match status" value="1"/>
</dbReference>
<name>MTAP_GEOSL</name>
<gene>
    <name evidence="1" type="primary">mtnP</name>
    <name type="ordered locus">GSU1112</name>
</gene>
<evidence type="ECO:0000255" key="1">
    <source>
        <dbReference type="HAMAP-Rule" id="MF_01963"/>
    </source>
</evidence>